<sequence length="170" mass="19346">MVGACMTIRPLVRYPDRRLAIPARPVTAFDDELRELAADLLDTMRAAPGIGITAPHIGVPLRVVVLELDAKDGARTYVNPEITWASPEMIMHREGSVSMPGVNDEVQRHARVRISYWDLDGTMQTEDSEALRAVCHQHEIDQLDGMFWIQRLSRLKRERLVKKFEKMSRG</sequence>
<protein>
    <recommendedName>
        <fullName evidence="1">Peptide deformylase-like</fullName>
    </recommendedName>
    <alternativeName>
        <fullName evidence="1">Polypeptide deformylase-like</fullName>
    </alternativeName>
</protein>
<accession>Q89N37</accession>
<feature type="chain" id="PRO_0000082891" description="Peptide deformylase-like">
    <location>
        <begin position="1"/>
        <end position="170"/>
    </location>
</feature>
<feature type="active site" evidence="1">
    <location>
        <position position="139"/>
    </location>
</feature>
<keyword id="KW-1185">Reference proteome</keyword>
<comment type="similarity">
    <text evidence="1">Belongs to the polypeptide deformylase family.</text>
</comment>
<name>DEFL_BRADU</name>
<reference key="1">
    <citation type="journal article" date="2002" name="DNA Res.">
        <title>Complete genomic sequence of nitrogen-fixing symbiotic bacterium Bradyrhizobium japonicum USDA110.</title>
        <authorList>
            <person name="Kaneko T."/>
            <person name="Nakamura Y."/>
            <person name="Sato S."/>
            <person name="Minamisawa K."/>
            <person name="Uchiumi T."/>
            <person name="Sasamoto S."/>
            <person name="Watanabe A."/>
            <person name="Idesawa K."/>
            <person name="Iriguchi M."/>
            <person name="Kawashima K."/>
            <person name="Kohara M."/>
            <person name="Matsumoto M."/>
            <person name="Shimpo S."/>
            <person name="Tsuruoka H."/>
            <person name="Wada T."/>
            <person name="Yamada M."/>
            <person name="Tabata S."/>
        </authorList>
    </citation>
    <scope>NUCLEOTIDE SEQUENCE [LARGE SCALE GENOMIC DNA]</scope>
    <source>
        <strain>JCM 10833 / BCRC 13528 / IAM 13628 / NBRC 14792 / USDA 110</strain>
    </source>
</reference>
<dbReference type="EMBL" id="BA000040">
    <property type="protein sequence ID" value="BAC49270.1"/>
    <property type="molecule type" value="Genomic_DNA"/>
</dbReference>
<dbReference type="RefSeq" id="NP_770645.2">
    <property type="nucleotide sequence ID" value="NC_004463.1"/>
</dbReference>
<dbReference type="SMR" id="Q89N37"/>
<dbReference type="STRING" id="224911.AAV28_17045"/>
<dbReference type="EnsemblBacteria" id="BAC49270">
    <property type="protein sequence ID" value="BAC49270"/>
    <property type="gene ID" value="BAC49270"/>
</dbReference>
<dbReference type="KEGG" id="bja:bll4005"/>
<dbReference type="PATRIC" id="fig|224911.5.peg.4014"/>
<dbReference type="eggNOG" id="COG0242">
    <property type="taxonomic scope" value="Bacteria"/>
</dbReference>
<dbReference type="HOGENOM" id="CLU_061901_2_0_5"/>
<dbReference type="InParanoid" id="Q89N37"/>
<dbReference type="OrthoDB" id="9804313at2"/>
<dbReference type="Proteomes" id="UP000002526">
    <property type="component" value="Chromosome"/>
</dbReference>
<dbReference type="GO" id="GO:0042586">
    <property type="term" value="F:peptide deformylase activity"/>
    <property type="evidence" value="ECO:0000318"/>
    <property type="project" value="GO_Central"/>
</dbReference>
<dbReference type="GO" id="GO:0043686">
    <property type="term" value="P:co-translational protein modification"/>
    <property type="evidence" value="ECO:0000318"/>
    <property type="project" value="GO_Central"/>
</dbReference>
<dbReference type="GO" id="GO:0006412">
    <property type="term" value="P:translation"/>
    <property type="evidence" value="ECO:0007669"/>
    <property type="project" value="UniProtKB-UniRule"/>
</dbReference>
<dbReference type="CDD" id="cd00487">
    <property type="entry name" value="Pep_deformylase"/>
    <property type="match status" value="1"/>
</dbReference>
<dbReference type="FunFam" id="3.90.45.10:FF:000020">
    <property type="entry name" value="Peptide deformylase"/>
    <property type="match status" value="1"/>
</dbReference>
<dbReference type="Gene3D" id="3.90.45.10">
    <property type="entry name" value="Peptide deformylase"/>
    <property type="match status" value="1"/>
</dbReference>
<dbReference type="HAMAP" id="MF_00163">
    <property type="entry name" value="Pep_deformylase"/>
    <property type="match status" value="1"/>
</dbReference>
<dbReference type="InterPro" id="IPR023635">
    <property type="entry name" value="Peptide_deformylase"/>
</dbReference>
<dbReference type="InterPro" id="IPR036821">
    <property type="entry name" value="Peptide_deformylase_sf"/>
</dbReference>
<dbReference type="NCBIfam" id="TIGR00079">
    <property type="entry name" value="pept_deformyl"/>
    <property type="match status" value="1"/>
</dbReference>
<dbReference type="NCBIfam" id="NF001159">
    <property type="entry name" value="PRK00150.1-3"/>
    <property type="match status" value="1"/>
</dbReference>
<dbReference type="NCBIfam" id="NF009484">
    <property type="entry name" value="PRK12846.1-5"/>
    <property type="match status" value="1"/>
</dbReference>
<dbReference type="PANTHER" id="PTHR10458">
    <property type="entry name" value="PEPTIDE DEFORMYLASE"/>
    <property type="match status" value="1"/>
</dbReference>
<dbReference type="PANTHER" id="PTHR10458:SF22">
    <property type="entry name" value="PEPTIDE DEFORMYLASE"/>
    <property type="match status" value="1"/>
</dbReference>
<dbReference type="Pfam" id="PF01327">
    <property type="entry name" value="Pep_deformylase"/>
    <property type="match status" value="1"/>
</dbReference>
<dbReference type="PIRSF" id="PIRSF004749">
    <property type="entry name" value="Pep_def"/>
    <property type="match status" value="1"/>
</dbReference>
<dbReference type="PRINTS" id="PR01576">
    <property type="entry name" value="PDEFORMYLASE"/>
</dbReference>
<dbReference type="SUPFAM" id="SSF56420">
    <property type="entry name" value="Peptide deformylase"/>
    <property type="match status" value="1"/>
</dbReference>
<organism>
    <name type="scientific">Bradyrhizobium diazoefficiens (strain JCM 10833 / BCRC 13528 / IAM 13628 / NBRC 14792 / USDA 110)</name>
    <dbReference type="NCBI Taxonomy" id="224911"/>
    <lineage>
        <taxon>Bacteria</taxon>
        <taxon>Pseudomonadati</taxon>
        <taxon>Pseudomonadota</taxon>
        <taxon>Alphaproteobacteria</taxon>
        <taxon>Hyphomicrobiales</taxon>
        <taxon>Nitrobacteraceae</taxon>
        <taxon>Bradyrhizobium</taxon>
    </lineage>
</organism>
<gene>
    <name type="ordered locus">bll4005</name>
</gene>
<proteinExistence type="inferred from homology"/>
<evidence type="ECO:0000255" key="1">
    <source>
        <dbReference type="HAMAP-Rule" id="MF_00163"/>
    </source>
</evidence>